<sequence>MSAQKPGLHPRNRHHSRYDLATLCQVNPELRQFLTLTPAGEQSVDFANPLAVKALNKALLAHFYAVANWDIPDGFLCPPVPGRADYIHHLADLLAEASGTIPANASILDIGVGANCIYPLIGVHEYGWRFTGSETSSQALSSAQAIISSNPGLNRAIRLRRQKESGAIFNGIIHKNEQYDATLCNPPFHDSAAAARAGSERKRRNLGLNKDDALNFGGQQQELWCEGGEVTFIKKMIEESKGFAKQVMWFTSLVSRGENLPPLYRALTDVGAVKVVKKEMAQGQKQSRFIAWTFMNDEQRRRFVNRQR</sequence>
<keyword id="KW-0963">Cytoplasm</keyword>
<keyword id="KW-0489">Methyltransferase</keyword>
<keyword id="KW-0698">rRNA processing</keyword>
<keyword id="KW-0949">S-adenosyl-L-methionine</keyword>
<keyword id="KW-0808">Transferase</keyword>
<protein>
    <recommendedName>
        <fullName evidence="1">Ribosomal RNA large subunit methyltransferase F</fullName>
        <ecNumber evidence="1">2.1.1.181</ecNumber>
    </recommendedName>
    <alternativeName>
        <fullName evidence="1">23S rRNA mA1618 methyltransferase</fullName>
    </alternativeName>
    <alternativeName>
        <fullName evidence="1">rRNA adenine N-6-methyltransferase</fullName>
    </alternativeName>
</protein>
<reference key="1">
    <citation type="journal article" date="2009" name="J. Bacteriol.">
        <title>Genomic sequencing reveals regulatory mutations and recombinational events in the widely used MC4100 lineage of Escherichia coli K-12.</title>
        <authorList>
            <person name="Ferenci T."/>
            <person name="Zhou Z."/>
            <person name="Betteridge T."/>
            <person name="Ren Y."/>
            <person name="Liu Y."/>
            <person name="Feng L."/>
            <person name="Reeves P.R."/>
            <person name="Wang L."/>
        </authorList>
    </citation>
    <scope>NUCLEOTIDE SEQUENCE [LARGE SCALE GENOMIC DNA]</scope>
    <source>
        <strain>K12 / MC4100 / BW2952</strain>
    </source>
</reference>
<name>RLMF_ECOBW</name>
<gene>
    <name evidence="1" type="primary">rlmF</name>
    <name type="ordered locus">BWG_0660</name>
</gene>
<organism>
    <name type="scientific">Escherichia coli (strain K12 / MC4100 / BW2952)</name>
    <dbReference type="NCBI Taxonomy" id="595496"/>
    <lineage>
        <taxon>Bacteria</taxon>
        <taxon>Pseudomonadati</taxon>
        <taxon>Pseudomonadota</taxon>
        <taxon>Gammaproteobacteria</taxon>
        <taxon>Enterobacterales</taxon>
        <taxon>Enterobacteriaceae</taxon>
        <taxon>Escherichia</taxon>
    </lineage>
</organism>
<proteinExistence type="inferred from homology"/>
<feature type="chain" id="PRO_1000216111" description="Ribosomal RNA large subunit methyltransferase F">
    <location>
        <begin position="1"/>
        <end position="308"/>
    </location>
</feature>
<accession>C4ZXX9</accession>
<evidence type="ECO:0000255" key="1">
    <source>
        <dbReference type="HAMAP-Rule" id="MF_01848"/>
    </source>
</evidence>
<dbReference type="EC" id="2.1.1.181" evidence="1"/>
<dbReference type="EMBL" id="CP001396">
    <property type="protein sequence ID" value="ACR65092.1"/>
    <property type="molecule type" value="Genomic_DNA"/>
</dbReference>
<dbReference type="RefSeq" id="WP_001295299.1">
    <property type="nucleotide sequence ID" value="NC_012759.1"/>
</dbReference>
<dbReference type="SMR" id="C4ZXX9"/>
<dbReference type="KEGG" id="ebw:BWG_0660"/>
<dbReference type="HOGENOM" id="CLU_027534_3_0_6"/>
<dbReference type="GO" id="GO:0005737">
    <property type="term" value="C:cytoplasm"/>
    <property type="evidence" value="ECO:0007669"/>
    <property type="project" value="UniProtKB-SubCell"/>
</dbReference>
<dbReference type="GO" id="GO:0052907">
    <property type="term" value="F:23S rRNA (adenine(1618)-N(6))-methyltransferase activity"/>
    <property type="evidence" value="ECO:0007669"/>
    <property type="project" value="UniProtKB-EC"/>
</dbReference>
<dbReference type="GO" id="GO:0070475">
    <property type="term" value="P:rRNA base methylation"/>
    <property type="evidence" value="ECO:0007669"/>
    <property type="project" value="TreeGrafter"/>
</dbReference>
<dbReference type="FunFam" id="3.40.50.150:FF:000045">
    <property type="entry name" value="Ribosomal RNA large subunit methyltransferase F"/>
    <property type="match status" value="1"/>
</dbReference>
<dbReference type="Gene3D" id="3.40.50.150">
    <property type="entry name" value="Vaccinia Virus protein VP39"/>
    <property type="match status" value="1"/>
</dbReference>
<dbReference type="HAMAP" id="MF_01848">
    <property type="entry name" value="23SrRNA_methyltr_F"/>
    <property type="match status" value="1"/>
</dbReference>
<dbReference type="InterPro" id="IPR010286">
    <property type="entry name" value="METTL16/RlmF"/>
</dbReference>
<dbReference type="InterPro" id="IPR016909">
    <property type="entry name" value="rRNA_lsu_MeTfrase_F"/>
</dbReference>
<dbReference type="InterPro" id="IPR029063">
    <property type="entry name" value="SAM-dependent_MTases_sf"/>
</dbReference>
<dbReference type="NCBIfam" id="NF008725">
    <property type="entry name" value="PRK11727.1"/>
    <property type="match status" value="1"/>
</dbReference>
<dbReference type="PANTHER" id="PTHR13393:SF0">
    <property type="entry name" value="RNA N6-ADENOSINE-METHYLTRANSFERASE METTL16"/>
    <property type="match status" value="1"/>
</dbReference>
<dbReference type="PANTHER" id="PTHR13393">
    <property type="entry name" value="SAM-DEPENDENT METHYLTRANSFERASE"/>
    <property type="match status" value="1"/>
</dbReference>
<dbReference type="Pfam" id="PF05971">
    <property type="entry name" value="Methyltransf_10"/>
    <property type="match status" value="1"/>
</dbReference>
<dbReference type="PIRSF" id="PIRSF029038">
    <property type="entry name" value="Mtase_YbiN_prd"/>
    <property type="match status" value="1"/>
</dbReference>
<dbReference type="SUPFAM" id="SSF53335">
    <property type="entry name" value="S-adenosyl-L-methionine-dependent methyltransferases"/>
    <property type="match status" value="1"/>
</dbReference>
<comment type="function">
    <text evidence="1">Specifically methylates the adenine in position 1618 of 23S rRNA.</text>
</comment>
<comment type="catalytic activity">
    <reaction evidence="1">
        <text>adenosine(1618) in 23S rRNA + S-adenosyl-L-methionine = N(6)-methyladenosine(1618) in 23S rRNA + S-adenosyl-L-homocysteine + H(+)</text>
        <dbReference type="Rhea" id="RHEA:16497"/>
        <dbReference type="Rhea" id="RHEA-COMP:10229"/>
        <dbReference type="Rhea" id="RHEA-COMP:10231"/>
        <dbReference type="ChEBI" id="CHEBI:15378"/>
        <dbReference type="ChEBI" id="CHEBI:57856"/>
        <dbReference type="ChEBI" id="CHEBI:59789"/>
        <dbReference type="ChEBI" id="CHEBI:74411"/>
        <dbReference type="ChEBI" id="CHEBI:74449"/>
        <dbReference type="EC" id="2.1.1.181"/>
    </reaction>
</comment>
<comment type="subcellular location">
    <subcellularLocation>
        <location evidence="1">Cytoplasm</location>
    </subcellularLocation>
</comment>
<comment type="similarity">
    <text evidence="1">Belongs to the methyltransferase superfamily. METTL16/RlmF family.</text>
</comment>